<evidence type="ECO:0000255" key="1">
    <source>
        <dbReference type="HAMAP-Rule" id="MF_02004"/>
    </source>
</evidence>
<gene>
    <name evidence="1" type="primary">valS</name>
    <name type="ordered locus">TDE_1364</name>
</gene>
<sequence length="909" mass="103905">MSEKLQAIELEKSYNPKEFEERIYSFWEANKCFSPIKKKNTKNTFTVVIPPPNVTGVLHVGHALDETLQDVIVRYHRMKGDETLWIPGTDHAGIATQSVVEKKLKAEGKNRRDLGREAFIEKVWEVKNEHHSIITKQLRKMGVSVDWDRERFTLDEGLSQAVREVFVSLYEQGLIYQGNYLVNWCPSCGTAISDDEVEHEDRKGGMYHIYYKLADGAVLQNEAGEKIQEIEIATTRPETLLGDTAIAVHPEDPRYASIIGKEVILPLANRKIPVIADSYVDKEFGTGVVKITPAHDPNDWEVGKRHNLPVLNILNPDGTLNDAVPEKYRGLSTEKARKAVIEDLEELGLFKNEEKIKHAVGCCYRCHTSIEPYVSKQWFVKMQPLAQKALDAWKKGDVVFYPQKWENTYAHWMNNIRDWCISRQLWWGHRIPVWYCADCGKTIVSRTDITECPHCKSKNIKQDEDVLDTWFSSWLWPFSTLGWPEKTEDLARFFPTSALVTGHDIIFFWVARMIMASLQFTGKAPFKDIFIHGLVRDKQGRKMSKSLGNGIDPLVAIEEFGADAMKFTLTFMCGSQSQDFLIDMESFKLGSKFANKVWNASRYILGNLAGRTIVPVGRDGSLNSLKELDRWIYHELNEAAQTVRSSLDSYRYNEAAQKVYEFFWNNFCDWYVEGTKLSFKYGDEKEKDRAASVLLAVLEESLRLLHPFLAFVTEEIYSKLPGNCAEGALPRAKILMTSDYPEEKKERIDEAASIRFRTLQEIVRNIRALRAECGIDPQLKLKVSLYIEKNSPAEAARENSEIIEMLSGLSGLDFIDSLKEKPASSIGVVGAGFEAFLITGDSIDIDQLKKRFEKELEKNEQNASKIDSKLKNENFVKNAPPEVIEGEKEKHAEFLRRIEKLKGYLEGMR</sequence>
<dbReference type="EC" id="6.1.1.9" evidence="1"/>
<dbReference type="EMBL" id="AE017226">
    <property type="protein sequence ID" value="AAS11881.1"/>
    <property type="molecule type" value="Genomic_DNA"/>
</dbReference>
<dbReference type="RefSeq" id="NP_971970.1">
    <property type="nucleotide sequence ID" value="NC_002967.9"/>
</dbReference>
<dbReference type="RefSeq" id="WP_002678931.1">
    <property type="nucleotide sequence ID" value="NC_002967.9"/>
</dbReference>
<dbReference type="SMR" id="Q73MZ2"/>
<dbReference type="STRING" id="243275.TDE_1364"/>
<dbReference type="PaxDb" id="243275-TDE_1364"/>
<dbReference type="GeneID" id="2739465"/>
<dbReference type="KEGG" id="tde:TDE_1364"/>
<dbReference type="PATRIC" id="fig|243275.7.peg.1310"/>
<dbReference type="eggNOG" id="COG0525">
    <property type="taxonomic scope" value="Bacteria"/>
</dbReference>
<dbReference type="HOGENOM" id="CLU_001493_0_2_12"/>
<dbReference type="OrthoDB" id="9810365at2"/>
<dbReference type="Proteomes" id="UP000008212">
    <property type="component" value="Chromosome"/>
</dbReference>
<dbReference type="GO" id="GO:0005829">
    <property type="term" value="C:cytosol"/>
    <property type="evidence" value="ECO:0007669"/>
    <property type="project" value="TreeGrafter"/>
</dbReference>
<dbReference type="GO" id="GO:0002161">
    <property type="term" value="F:aminoacyl-tRNA deacylase activity"/>
    <property type="evidence" value="ECO:0007669"/>
    <property type="project" value="InterPro"/>
</dbReference>
<dbReference type="GO" id="GO:0005524">
    <property type="term" value="F:ATP binding"/>
    <property type="evidence" value="ECO:0007669"/>
    <property type="project" value="UniProtKB-UniRule"/>
</dbReference>
<dbReference type="GO" id="GO:0004832">
    <property type="term" value="F:valine-tRNA ligase activity"/>
    <property type="evidence" value="ECO:0007669"/>
    <property type="project" value="UniProtKB-UniRule"/>
</dbReference>
<dbReference type="GO" id="GO:0006438">
    <property type="term" value="P:valyl-tRNA aminoacylation"/>
    <property type="evidence" value="ECO:0007669"/>
    <property type="project" value="UniProtKB-UniRule"/>
</dbReference>
<dbReference type="CDD" id="cd07962">
    <property type="entry name" value="Anticodon_Ia_Val"/>
    <property type="match status" value="1"/>
</dbReference>
<dbReference type="CDD" id="cd00817">
    <property type="entry name" value="ValRS_core"/>
    <property type="match status" value="1"/>
</dbReference>
<dbReference type="FunFam" id="1.10.287.380:FF:000001">
    <property type="entry name" value="Valine--tRNA ligase"/>
    <property type="match status" value="1"/>
</dbReference>
<dbReference type="FunFam" id="3.40.50.620:FF:000032">
    <property type="entry name" value="Valine--tRNA ligase"/>
    <property type="match status" value="1"/>
</dbReference>
<dbReference type="FunFam" id="3.40.50.620:FF:000098">
    <property type="entry name" value="Valine--tRNA ligase"/>
    <property type="match status" value="1"/>
</dbReference>
<dbReference type="FunFam" id="3.90.740.10:FF:000010">
    <property type="entry name" value="Valine--tRNA ligase"/>
    <property type="match status" value="1"/>
</dbReference>
<dbReference type="Gene3D" id="3.40.50.620">
    <property type="entry name" value="HUPs"/>
    <property type="match status" value="2"/>
</dbReference>
<dbReference type="Gene3D" id="1.10.730.10">
    <property type="entry name" value="Isoleucyl-tRNA Synthetase, Domain 1"/>
    <property type="match status" value="1"/>
</dbReference>
<dbReference type="Gene3D" id="1.10.287.380">
    <property type="entry name" value="Valyl-tRNA synthetase, C-terminal domain"/>
    <property type="match status" value="1"/>
</dbReference>
<dbReference type="Gene3D" id="3.90.740.10">
    <property type="entry name" value="Valyl/Leucyl/Isoleucyl-tRNA synthetase, editing domain"/>
    <property type="match status" value="2"/>
</dbReference>
<dbReference type="HAMAP" id="MF_02004">
    <property type="entry name" value="Val_tRNA_synth_type1"/>
    <property type="match status" value="1"/>
</dbReference>
<dbReference type="InterPro" id="IPR001412">
    <property type="entry name" value="aa-tRNA-synth_I_CS"/>
</dbReference>
<dbReference type="InterPro" id="IPR002300">
    <property type="entry name" value="aa-tRNA-synth_Ia"/>
</dbReference>
<dbReference type="InterPro" id="IPR033705">
    <property type="entry name" value="Anticodon_Ia_Val"/>
</dbReference>
<dbReference type="InterPro" id="IPR013155">
    <property type="entry name" value="M/V/L/I-tRNA-synth_anticd-bd"/>
</dbReference>
<dbReference type="InterPro" id="IPR014729">
    <property type="entry name" value="Rossmann-like_a/b/a_fold"/>
</dbReference>
<dbReference type="InterPro" id="IPR010978">
    <property type="entry name" value="tRNA-bd_arm"/>
</dbReference>
<dbReference type="InterPro" id="IPR009080">
    <property type="entry name" value="tRNAsynth_Ia_anticodon-bd"/>
</dbReference>
<dbReference type="InterPro" id="IPR037118">
    <property type="entry name" value="Val-tRNA_synth_C_sf"/>
</dbReference>
<dbReference type="InterPro" id="IPR019499">
    <property type="entry name" value="Val-tRNA_synth_tRNA-bd"/>
</dbReference>
<dbReference type="InterPro" id="IPR009008">
    <property type="entry name" value="Val/Leu/Ile-tRNA-synth_edit"/>
</dbReference>
<dbReference type="InterPro" id="IPR002303">
    <property type="entry name" value="Valyl-tRNA_ligase"/>
</dbReference>
<dbReference type="NCBIfam" id="NF004349">
    <property type="entry name" value="PRK05729.1"/>
    <property type="match status" value="1"/>
</dbReference>
<dbReference type="NCBIfam" id="TIGR00422">
    <property type="entry name" value="valS"/>
    <property type="match status" value="1"/>
</dbReference>
<dbReference type="PANTHER" id="PTHR11946:SF93">
    <property type="entry name" value="VALINE--TRNA LIGASE, CHLOROPLASTIC_MITOCHONDRIAL 2"/>
    <property type="match status" value="1"/>
</dbReference>
<dbReference type="PANTHER" id="PTHR11946">
    <property type="entry name" value="VALYL-TRNA SYNTHETASES"/>
    <property type="match status" value="1"/>
</dbReference>
<dbReference type="Pfam" id="PF08264">
    <property type="entry name" value="Anticodon_1"/>
    <property type="match status" value="1"/>
</dbReference>
<dbReference type="Pfam" id="PF00133">
    <property type="entry name" value="tRNA-synt_1"/>
    <property type="match status" value="1"/>
</dbReference>
<dbReference type="Pfam" id="PF10458">
    <property type="entry name" value="Val_tRNA-synt_C"/>
    <property type="match status" value="1"/>
</dbReference>
<dbReference type="PRINTS" id="PR00986">
    <property type="entry name" value="TRNASYNTHVAL"/>
</dbReference>
<dbReference type="SUPFAM" id="SSF47323">
    <property type="entry name" value="Anticodon-binding domain of a subclass of class I aminoacyl-tRNA synthetases"/>
    <property type="match status" value="1"/>
</dbReference>
<dbReference type="SUPFAM" id="SSF52374">
    <property type="entry name" value="Nucleotidylyl transferase"/>
    <property type="match status" value="1"/>
</dbReference>
<dbReference type="SUPFAM" id="SSF46589">
    <property type="entry name" value="tRNA-binding arm"/>
    <property type="match status" value="1"/>
</dbReference>
<dbReference type="SUPFAM" id="SSF50677">
    <property type="entry name" value="ValRS/IleRS/LeuRS editing domain"/>
    <property type="match status" value="1"/>
</dbReference>
<dbReference type="PROSITE" id="PS00178">
    <property type="entry name" value="AA_TRNA_LIGASE_I"/>
    <property type="match status" value="1"/>
</dbReference>
<protein>
    <recommendedName>
        <fullName evidence="1">Valine--tRNA ligase</fullName>
        <ecNumber evidence="1">6.1.1.9</ecNumber>
    </recommendedName>
    <alternativeName>
        <fullName evidence="1">Valyl-tRNA synthetase</fullName>
        <shortName evidence="1">ValRS</shortName>
    </alternativeName>
</protein>
<proteinExistence type="inferred from homology"/>
<feature type="chain" id="PRO_0000224591" description="Valine--tRNA ligase">
    <location>
        <begin position="1"/>
        <end position="909"/>
    </location>
</feature>
<feature type="coiled-coil region" evidence="1">
    <location>
        <begin position="843"/>
        <end position="902"/>
    </location>
</feature>
<feature type="short sequence motif" description="'HIGH' region">
    <location>
        <begin position="52"/>
        <end position="62"/>
    </location>
</feature>
<feature type="short sequence motif" description="'KMSKS' region">
    <location>
        <begin position="542"/>
        <end position="546"/>
    </location>
</feature>
<feature type="binding site" evidence="1">
    <location>
        <position position="545"/>
    </location>
    <ligand>
        <name>ATP</name>
        <dbReference type="ChEBI" id="CHEBI:30616"/>
    </ligand>
</feature>
<reference key="1">
    <citation type="journal article" date="2004" name="Proc. Natl. Acad. Sci. U.S.A.">
        <title>Comparison of the genome of the oral pathogen Treponema denticola with other spirochete genomes.</title>
        <authorList>
            <person name="Seshadri R."/>
            <person name="Myers G.S.A."/>
            <person name="Tettelin H."/>
            <person name="Eisen J.A."/>
            <person name="Heidelberg J.F."/>
            <person name="Dodson R.J."/>
            <person name="Davidsen T.M."/>
            <person name="DeBoy R.T."/>
            <person name="Fouts D.E."/>
            <person name="Haft D.H."/>
            <person name="Selengut J."/>
            <person name="Ren Q."/>
            <person name="Brinkac L.M."/>
            <person name="Madupu R."/>
            <person name="Kolonay J.F."/>
            <person name="Durkin S.A."/>
            <person name="Daugherty S.C."/>
            <person name="Shetty J."/>
            <person name="Shvartsbeyn A."/>
            <person name="Gebregeorgis E."/>
            <person name="Geer K."/>
            <person name="Tsegaye G."/>
            <person name="Malek J.A."/>
            <person name="Ayodeji B."/>
            <person name="Shatsman S."/>
            <person name="McLeod M.P."/>
            <person name="Smajs D."/>
            <person name="Howell J.K."/>
            <person name="Pal S."/>
            <person name="Amin A."/>
            <person name="Vashisth P."/>
            <person name="McNeill T.Z."/>
            <person name="Xiang Q."/>
            <person name="Sodergren E."/>
            <person name="Baca E."/>
            <person name="Weinstock G.M."/>
            <person name="Norris S.J."/>
            <person name="Fraser C.M."/>
            <person name="Paulsen I.T."/>
        </authorList>
    </citation>
    <scope>NUCLEOTIDE SEQUENCE [LARGE SCALE GENOMIC DNA]</scope>
    <source>
        <strain>ATCC 35405 / DSM 14222 / CIP 103919 / JCM 8153 / KCTC 15104</strain>
    </source>
</reference>
<keyword id="KW-0030">Aminoacyl-tRNA synthetase</keyword>
<keyword id="KW-0067">ATP-binding</keyword>
<keyword id="KW-0175">Coiled coil</keyword>
<keyword id="KW-0963">Cytoplasm</keyword>
<keyword id="KW-0436">Ligase</keyword>
<keyword id="KW-0547">Nucleotide-binding</keyword>
<keyword id="KW-0648">Protein biosynthesis</keyword>
<keyword id="KW-1185">Reference proteome</keyword>
<comment type="function">
    <text evidence="1">Catalyzes the attachment of valine to tRNA(Val). As ValRS can inadvertently accommodate and process structurally similar amino acids such as threonine, to avoid such errors, it has a 'posttransfer' editing activity that hydrolyzes mischarged Thr-tRNA(Val) in a tRNA-dependent manner.</text>
</comment>
<comment type="catalytic activity">
    <reaction evidence="1">
        <text>tRNA(Val) + L-valine + ATP = L-valyl-tRNA(Val) + AMP + diphosphate</text>
        <dbReference type="Rhea" id="RHEA:10704"/>
        <dbReference type="Rhea" id="RHEA-COMP:9672"/>
        <dbReference type="Rhea" id="RHEA-COMP:9708"/>
        <dbReference type="ChEBI" id="CHEBI:30616"/>
        <dbReference type="ChEBI" id="CHEBI:33019"/>
        <dbReference type="ChEBI" id="CHEBI:57762"/>
        <dbReference type="ChEBI" id="CHEBI:78442"/>
        <dbReference type="ChEBI" id="CHEBI:78537"/>
        <dbReference type="ChEBI" id="CHEBI:456215"/>
        <dbReference type="EC" id="6.1.1.9"/>
    </reaction>
</comment>
<comment type="subunit">
    <text evidence="1">Monomer.</text>
</comment>
<comment type="subcellular location">
    <subcellularLocation>
        <location evidence="1">Cytoplasm</location>
    </subcellularLocation>
</comment>
<comment type="domain">
    <text evidence="1">ValRS has two distinct active sites: one for aminoacylation and one for editing. The misactivated threonine is translocated from the active site to the editing site.</text>
</comment>
<comment type="domain">
    <text evidence="1">The C-terminal coiled-coil domain is crucial for aminoacylation activity.</text>
</comment>
<comment type="similarity">
    <text evidence="1">Belongs to the class-I aminoacyl-tRNA synthetase family. ValS type 1 subfamily.</text>
</comment>
<accession>Q73MZ2</accession>
<name>SYV_TREDE</name>
<organism>
    <name type="scientific">Treponema denticola (strain ATCC 35405 / DSM 14222 / CIP 103919 / JCM 8153 / KCTC 15104)</name>
    <dbReference type="NCBI Taxonomy" id="243275"/>
    <lineage>
        <taxon>Bacteria</taxon>
        <taxon>Pseudomonadati</taxon>
        <taxon>Spirochaetota</taxon>
        <taxon>Spirochaetia</taxon>
        <taxon>Spirochaetales</taxon>
        <taxon>Treponemataceae</taxon>
        <taxon>Treponema</taxon>
    </lineage>
</organism>